<keyword id="KW-0028">Amino-acid biosynthesis</keyword>
<keyword id="KW-0963">Cytoplasm</keyword>
<keyword id="KW-0238">DNA-binding</keyword>
<keyword id="KW-0486">Methionine biosynthesis</keyword>
<keyword id="KW-0678">Repressor</keyword>
<keyword id="KW-0804">Transcription</keyword>
<keyword id="KW-0805">Transcription regulation</keyword>
<feature type="chain" id="PRO_1000046490" description="Met repressor">
    <location>
        <begin position="1"/>
        <end position="105"/>
    </location>
</feature>
<proteinExistence type="inferred from homology"/>
<comment type="function">
    <text evidence="1">This regulatory protein, when combined with SAM (S-adenosylmethionine) represses the expression of the methionine regulon and of enzymes involved in SAM synthesis.</text>
</comment>
<comment type="subunit">
    <text evidence="1">Homodimer.</text>
</comment>
<comment type="subcellular location">
    <subcellularLocation>
        <location evidence="1">Cytoplasm</location>
    </subcellularLocation>
</comment>
<comment type="domain">
    <text>Does not bind DNA by a helix-turn-helix motif.</text>
</comment>
<comment type="similarity">
    <text evidence="1">Belongs to the MetJ family.</text>
</comment>
<accession>Q4QNP9</accession>
<gene>
    <name evidence="1" type="primary">metJ</name>
    <name type="ordered locus">NTHI0404</name>
</gene>
<evidence type="ECO:0000255" key="1">
    <source>
        <dbReference type="HAMAP-Rule" id="MF_00744"/>
    </source>
</evidence>
<name>METJ_HAEI8</name>
<organism>
    <name type="scientific">Haemophilus influenzae (strain 86-028NP)</name>
    <dbReference type="NCBI Taxonomy" id="281310"/>
    <lineage>
        <taxon>Bacteria</taxon>
        <taxon>Pseudomonadati</taxon>
        <taxon>Pseudomonadota</taxon>
        <taxon>Gammaproteobacteria</taxon>
        <taxon>Pasteurellales</taxon>
        <taxon>Pasteurellaceae</taxon>
        <taxon>Haemophilus</taxon>
    </lineage>
</organism>
<protein>
    <recommendedName>
        <fullName evidence="1">Met repressor</fullName>
    </recommendedName>
    <alternativeName>
        <fullName evidence="1">Met regulon regulatory protein MetJ</fullName>
    </alternativeName>
</protein>
<reference key="1">
    <citation type="journal article" date="2005" name="J. Bacteriol.">
        <title>Genomic sequence of an otitis media isolate of nontypeable Haemophilus influenzae: comparative study with H. influenzae serotype d, strain KW20.</title>
        <authorList>
            <person name="Harrison A."/>
            <person name="Dyer D.W."/>
            <person name="Gillaspy A."/>
            <person name="Ray W.C."/>
            <person name="Mungur R."/>
            <person name="Carson M.B."/>
            <person name="Zhong H."/>
            <person name="Gipson J."/>
            <person name="Gipson M."/>
            <person name="Johnson L.S."/>
            <person name="Lewis L."/>
            <person name="Bakaletz L.O."/>
            <person name="Munson R.S. Jr."/>
        </authorList>
    </citation>
    <scope>NUCLEOTIDE SEQUENCE [LARGE SCALE GENOMIC DNA]</scope>
    <source>
        <strain>86-028NP</strain>
    </source>
</reference>
<sequence>MADWDGKYISPYAEHGKKSEQVKKITVSIPIKVLEILTNERTRRQLKSLRHATNSELLCEAFLHAFTGQPLPTDADLMKERNDEIPEDAKVLMRELGVDPESWEY</sequence>
<dbReference type="EMBL" id="CP000057">
    <property type="protein sequence ID" value="AAX87348.1"/>
    <property type="molecule type" value="Genomic_DNA"/>
</dbReference>
<dbReference type="RefSeq" id="WP_005634287.1">
    <property type="nucleotide sequence ID" value="NC_007146.2"/>
</dbReference>
<dbReference type="SMR" id="Q4QNP9"/>
<dbReference type="GeneID" id="56957445"/>
<dbReference type="KEGG" id="hit:NTHI0404"/>
<dbReference type="HOGENOM" id="CLU_142318_0_0_6"/>
<dbReference type="Proteomes" id="UP000002525">
    <property type="component" value="Chromosome"/>
</dbReference>
<dbReference type="GO" id="GO:0005737">
    <property type="term" value="C:cytoplasm"/>
    <property type="evidence" value="ECO:0007669"/>
    <property type="project" value="UniProtKB-SubCell"/>
</dbReference>
<dbReference type="GO" id="GO:0003677">
    <property type="term" value="F:DNA binding"/>
    <property type="evidence" value="ECO:0007669"/>
    <property type="project" value="UniProtKB-KW"/>
</dbReference>
<dbReference type="GO" id="GO:0003700">
    <property type="term" value="F:DNA-binding transcription factor activity"/>
    <property type="evidence" value="ECO:0007669"/>
    <property type="project" value="InterPro"/>
</dbReference>
<dbReference type="GO" id="GO:0009086">
    <property type="term" value="P:methionine biosynthetic process"/>
    <property type="evidence" value="ECO:0007669"/>
    <property type="project" value="UniProtKB-UniRule"/>
</dbReference>
<dbReference type="GO" id="GO:0045892">
    <property type="term" value="P:negative regulation of DNA-templated transcription"/>
    <property type="evidence" value="ECO:0007669"/>
    <property type="project" value="UniProtKB-UniRule"/>
</dbReference>
<dbReference type="CDD" id="cd00490">
    <property type="entry name" value="Met_repressor_MetJ"/>
    <property type="match status" value="1"/>
</dbReference>
<dbReference type="Gene3D" id="1.10.140.10">
    <property type="entry name" value="MET Apo-Repressor, subunit A"/>
    <property type="match status" value="1"/>
</dbReference>
<dbReference type="HAMAP" id="MF_00744">
    <property type="entry name" value="MetJ"/>
    <property type="match status" value="1"/>
</dbReference>
<dbReference type="InterPro" id="IPR002084">
    <property type="entry name" value="Met_repressor_MetJ"/>
</dbReference>
<dbReference type="InterPro" id="IPR023453">
    <property type="entry name" value="Met_repressor_MetJ_dom_sf"/>
</dbReference>
<dbReference type="InterPro" id="IPR010985">
    <property type="entry name" value="Ribbon_hlx_hlx"/>
</dbReference>
<dbReference type="NCBIfam" id="NF003622">
    <property type="entry name" value="PRK05264.1"/>
    <property type="match status" value="1"/>
</dbReference>
<dbReference type="Pfam" id="PF01340">
    <property type="entry name" value="MetJ"/>
    <property type="match status" value="1"/>
</dbReference>
<dbReference type="SUPFAM" id="SSF47598">
    <property type="entry name" value="Ribbon-helix-helix"/>
    <property type="match status" value="1"/>
</dbReference>